<protein>
    <recommendedName>
        <fullName evidence="1">N-acetylneuraminate lyase</fullName>
        <shortName evidence="1">NAL</shortName>
        <shortName evidence="1">Neu5Ac lyase</shortName>
        <ecNumber evidence="1">4.1.3.3</ecNumber>
    </recommendedName>
    <alternativeName>
        <fullName evidence="1">N-acetylneuraminate pyruvate-lyase</fullName>
    </alternativeName>
    <alternativeName>
        <fullName evidence="1">N-acetylneuraminic acid aldolase</fullName>
    </alternativeName>
    <alternativeName>
        <fullName evidence="1">Sialate lyase</fullName>
    </alternativeName>
    <alternativeName>
        <fullName evidence="1">Sialic acid aldolase</fullName>
    </alternativeName>
    <alternativeName>
        <fullName evidence="1">Sialic acid lyase</fullName>
    </alternativeName>
</protein>
<organism>
    <name type="scientific">Shigella boydii serotype 4 (strain Sb227)</name>
    <dbReference type="NCBI Taxonomy" id="300268"/>
    <lineage>
        <taxon>Bacteria</taxon>
        <taxon>Pseudomonadati</taxon>
        <taxon>Pseudomonadota</taxon>
        <taxon>Gammaproteobacteria</taxon>
        <taxon>Enterobacterales</taxon>
        <taxon>Enterobacteriaceae</taxon>
        <taxon>Shigella</taxon>
    </lineage>
</organism>
<gene>
    <name evidence="1" type="primary">nanA</name>
    <name type="ordered locus">SBO_3164</name>
</gene>
<sequence length="297" mass="32623">MATNLRGVMAALLTPFDQQQALDKASLRRLVQFNIQQGIDGLYVGGSTGEAFVQSLSEREQVLEIVAEETKGKIKLIAHVGCVSTAESQQLAASAKRYGFDAVSAVTPFYYPFSFEEHCDHYRAIIDSADGLPMVVYNIPALSGVKLTLDQINTLVTLPGVGALKQTSGDLYQMEQIRREHPDLVLYNGYDEIFASGLLAGADGGIGSTYNIMGWRYQGIVKALKEGDIQTAQKLQTECNKVIDLLIKTGVFRGLKTVLHYMDVVSVPLCRKPFGPVDEKYLPELKALAQQLMQERG</sequence>
<feature type="chain" id="PRO_1000066932" description="N-acetylneuraminate lyase">
    <location>
        <begin position="1"/>
        <end position="297"/>
    </location>
</feature>
<feature type="active site" description="Proton donor" evidence="1">
    <location>
        <position position="137"/>
    </location>
</feature>
<feature type="active site" description="Schiff-base intermediate with substrate" evidence="1">
    <location>
        <position position="165"/>
    </location>
</feature>
<feature type="binding site" evidence="1">
    <location>
        <position position="47"/>
    </location>
    <ligand>
        <name>aceneuramate</name>
        <dbReference type="ChEBI" id="CHEBI:173083"/>
    </ligand>
</feature>
<feature type="binding site" evidence="1">
    <location>
        <position position="48"/>
    </location>
    <ligand>
        <name>aceneuramate</name>
        <dbReference type="ChEBI" id="CHEBI:173083"/>
    </ligand>
</feature>
<feature type="binding site" evidence="1">
    <location>
        <position position="167"/>
    </location>
    <ligand>
        <name>aceneuramate</name>
        <dbReference type="ChEBI" id="CHEBI:173083"/>
    </ligand>
</feature>
<feature type="binding site" evidence="1">
    <location>
        <position position="189"/>
    </location>
    <ligand>
        <name>aceneuramate</name>
        <dbReference type="ChEBI" id="CHEBI:173083"/>
    </ligand>
</feature>
<feature type="binding site" evidence="1">
    <location>
        <position position="191"/>
    </location>
    <ligand>
        <name>aceneuramate</name>
        <dbReference type="ChEBI" id="CHEBI:173083"/>
    </ligand>
</feature>
<feature type="binding site" evidence="1">
    <location>
        <position position="192"/>
    </location>
    <ligand>
        <name>aceneuramate</name>
        <dbReference type="ChEBI" id="CHEBI:173083"/>
    </ligand>
</feature>
<feature type="binding site" evidence="1">
    <location>
        <position position="208"/>
    </location>
    <ligand>
        <name>aceneuramate</name>
        <dbReference type="ChEBI" id="CHEBI:173083"/>
    </ligand>
</feature>
<reference key="1">
    <citation type="journal article" date="2005" name="Nucleic Acids Res.">
        <title>Genome dynamics and diversity of Shigella species, the etiologic agents of bacillary dysentery.</title>
        <authorList>
            <person name="Yang F."/>
            <person name="Yang J."/>
            <person name="Zhang X."/>
            <person name="Chen L."/>
            <person name="Jiang Y."/>
            <person name="Yan Y."/>
            <person name="Tang X."/>
            <person name="Wang J."/>
            <person name="Xiong Z."/>
            <person name="Dong J."/>
            <person name="Xue Y."/>
            <person name="Zhu Y."/>
            <person name="Xu X."/>
            <person name="Sun L."/>
            <person name="Chen S."/>
            <person name="Nie H."/>
            <person name="Peng J."/>
            <person name="Xu J."/>
            <person name="Wang Y."/>
            <person name="Yuan Z."/>
            <person name="Wen Y."/>
            <person name="Yao Z."/>
            <person name="Shen Y."/>
            <person name="Qiang B."/>
            <person name="Hou Y."/>
            <person name="Yu J."/>
            <person name="Jin Q."/>
        </authorList>
    </citation>
    <scope>NUCLEOTIDE SEQUENCE [LARGE SCALE GENOMIC DNA]</scope>
    <source>
        <strain>Sb227</strain>
    </source>
</reference>
<name>NANA_SHIBS</name>
<evidence type="ECO:0000255" key="1">
    <source>
        <dbReference type="HAMAP-Rule" id="MF_01237"/>
    </source>
</evidence>
<accession>Q31W94</accession>
<keyword id="KW-0119">Carbohydrate metabolism</keyword>
<keyword id="KW-0963">Cytoplasm</keyword>
<keyword id="KW-0456">Lyase</keyword>
<keyword id="KW-0704">Schiff base</keyword>
<proteinExistence type="inferred from homology"/>
<comment type="function">
    <text evidence="1">Catalyzes the reversible aldol cleavage of N-acetylneuraminic acid (sialic acid; Neu5Ac) to form pyruvate and N-acetylmannosamine (ManNAc) via a Schiff base intermediate.</text>
</comment>
<comment type="catalytic activity">
    <reaction evidence="1">
        <text>aceneuramate = aldehydo-N-acetyl-D-mannosamine + pyruvate</text>
        <dbReference type="Rhea" id="RHEA:23296"/>
        <dbReference type="ChEBI" id="CHEBI:15361"/>
        <dbReference type="ChEBI" id="CHEBI:17122"/>
        <dbReference type="ChEBI" id="CHEBI:173083"/>
        <dbReference type="EC" id="4.1.3.3"/>
    </reaction>
</comment>
<comment type="pathway">
    <text evidence="1">Amino-sugar metabolism; N-acetylneuraminate degradation; D-fructose 6-phosphate from N-acetylneuraminate: step 1/5.</text>
</comment>
<comment type="subunit">
    <text evidence="1">Homotetramer.</text>
</comment>
<comment type="subcellular location">
    <subcellularLocation>
        <location evidence="1">Cytoplasm</location>
    </subcellularLocation>
</comment>
<comment type="similarity">
    <text evidence="1">Belongs to the DapA family. NanA subfamily.</text>
</comment>
<dbReference type="EC" id="4.1.3.3" evidence="1"/>
<dbReference type="EMBL" id="CP000036">
    <property type="protein sequence ID" value="ABB67664.1"/>
    <property type="molecule type" value="Genomic_DNA"/>
</dbReference>
<dbReference type="RefSeq" id="WP_000224722.1">
    <property type="nucleotide sequence ID" value="NC_007613.1"/>
</dbReference>
<dbReference type="SMR" id="Q31W94"/>
<dbReference type="KEGG" id="sbo:SBO_3164"/>
<dbReference type="HOGENOM" id="CLU_049343_6_0_6"/>
<dbReference type="UniPathway" id="UPA00629">
    <property type="reaction ID" value="UER00680"/>
</dbReference>
<dbReference type="Proteomes" id="UP000007067">
    <property type="component" value="Chromosome"/>
</dbReference>
<dbReference type="GO" id="GO:0005829">
    <property type="term" value="C:cytosol"/>
    <property type="evidence" value="ECO:0007669"/>
    <property type="project" value="TreeGrafter"/>
</dbReference>
<dbReference type="GO" id="GO:0008747">
    <property type="term" value="F:N-acetylneuraminate lyase activity"/>
    <property type="evidence" value="ECO:0007669"/>
    <property type="project" value="UniProtKB-UniRule"/>
</dbReference>
<dbReference type="GO" id="GO:0005975">
    <property type="term" value="P:carbohydrate metabolic process"/>
    <property type="evidence" value="ECO:0007669"/>
    <property type="project" value="UniProtKB-UniRule"/>
</dbReference>
<dbReference type="GO" id="GO:0019262">
    <property type="term" value="P:N-acetylneuraminate catabolic process"/>
    <property type="evidence" value="ECO:0007669"/>
    <property type="project" value="UniProtKB-UniRule"/>
</dbReference>
<dbReference type="CDD" id="cd00954">
    <property type="entry name" value="NAL"/>
    <property type="match status" value="1"/>
</dbReference>
<dbReference type="FunFam" id="3.20.20.70:FF:000039">
    <property type="entry name" value="N-acetylneuraminate lyase"/>
    <property type="match status" value="1"/>
</dbReference>
<dbReference type="Gene3D" id="3.20.20.70">
    <property type="entry name" value="Aldolase class I"/>
    <property type="match status" value="1"/>
</dbReference>
<dbReference type="HAMAP" id="MF_01237">
    <property type="entry name" value="N_acetylneuram_lyase"/>
    <property type="match status" value="1"/>
</dbReference>
<dbReference type="InterPro" id="IPR013785">
    <property type="entry name" value="Aldolase_TIM"/>
</dbReference>
<dbReference type="InterPro" id="IPR002220">
    <property type="entry name" value="DapA-like"/>
</dbReference>
<dbReference type="InterPro" id="IPR005264">
    <property type="entry name" value="NanA"/>
</dbReference>
<dbReference type="InterPro" id="IPR020625">
    <property type="entry name" value="Schiff_base-form_aldolases_AS"/>
</dbReference>
<dbReference type="InterPro" id="IPR020624">
    <property type="entry name" value="Schiff_base-form_aldolases_CS"/>
</dbReference>
<dbReference type="NCBIfam" id="TIGR00683">
    <property type="entry name" value="nanA"/>
    <property type="match status" value="1"/>
</dbReference>
<dbReference type="NCBIfam" id="NF003164">
    <property type="entry name" value="PRK04147.1"/>
    <property type="match status" value="1"/>
</dbReference>
<dbReference type="PANTHER" id="PTHR42849">
    <property type="entry name" value="N-ACETYLNEURAMINATE LYASE"/>
    <property type="match status" value="1"/>
</dbReference>
<dbReference type="PANTHER" id="PTHR42849:SF1">
    <property type="entry name" value="N-ACETYLNEURAMINATE LYASE"/>
    <property type="match status" value="1"/>
</dbReference>
<dbReference type="Pfam" id="PF00701">
    <property type="entry name" value="DHDPS"/>
    <property type="match status" value="1"/>
</dbReference>
<dbReference type="PIRSF" id="PIRSF001365">
    <property type="entry name" value="DHDPS"/>
    <property type="match status" value="1"/>
</dbReference>
<dbReference type="PRINTS" id="PR00146">
    <property type="entry name" value="DHPICSNTHASE"/>
</dbReference>
<dbReference type="SMART" id="SM01130">
    <property type="entry name" value="DHDPS"/>
    <property type="match status" value="1"/>
</dbReference>
<dbReference type="SUPFAM" id="SSF51569">
    <property type="entry name" value="Aldolase"/>
    <property type="match status" value="1"/>
</dbReference>
<dbReference type="PROSITE" id="PS00665">
    <property type="entry name" value="DHDPS_1"/>
    <property type="match status" value="1"/>
</dbReference>
<dbReference type="PROSITE" id="PS00666">
    <property type="entry name" value="DHDPS_2"/>
    <property type="match status" value="1"/>
</dbReference>